<dbReference type="EC" id="2.1.1.-"/>
<dbReference type="EMBL" id="BX248358">
    <property type="protein sequence ID" value="CAE49929.1"/>
    <property type="molecule type" value="Genomic_DNA"/>
</dbReference>
<dbReference type="RefSeq" id="WP_010935042.1">
    <property type="nucleotide sequence ID" value="NC_002935.2"/>
</dbReference>
<dbReference type="SMR" id="Q6NGV2"/>
<dbReference type="STRING" id="257309.DIP1398"/>
<dbReference type="DNASU" id="2649473"/>
<dbReference type="KEGG" id="cdi:DIP1398"/>
<dbReference type="PATRIC" id="fig|257309.4.peg.1378"/>
<dbReference type="HOGENOM" id="CLU_014689_7_0_11"/>
<dbReference type="Proteomes" id="UP000002198">
    <property type="component" value="Chromosome"/>
</dbReference>
<dbReference type="GO" id="GO:0070041">
    <property type="term" value="F:rRNA (uridine-C5-)-methyltransferase activity"/>
    <property type="evidence" value="ECO:0007669"/>
    <property type="project" value="TreeGrafter"/>
</dbReference>
<dbReference type="GO" id="GO:0070475">
    <property type="term" value="P:rRNA base methylation"/>
    <property type="evidence" value="ECO:0007669"/>
    <property type="project" value="TreeGrafter"/>
</dbReference>
<dbReference type="Gene3D" id="2.40.50.140">
    <property type="entry name" value="Nucleic acid-binding proteins"/>
    <property type="match status" value="1"/>
</dbReference>
<dbReference type="Gene3D" id="3.40.50.150">
    <property type="entry name" value="Vaccinia Virus protein VP39"/>
    <property type="match status" value="1"/>
</dbReference>
<dbReference type="InterPro" id="IPR030390">
    <property type="entry name" value="MeTrfase_TrmA_AS"/>
</dbReference>
<dbReference type="InterPro" id="IPR012340">
    <property type="entry name" value="NA-bd_OB-fold"/>
</dbReference>
<dbReference type="InterPro" id="IPR029063">
    <property type="entry name" value="SAM-dependent_MTases_sf"/>
</dbReference>
<dbReference type="InterPro" id="IPR002792">
    <property type="entry name" value="TRAM_dom"/>
</dbReference>
<dbReference type="InterPro" id="IPR010280">
    <property type="entry name" value="U5_MeTrfase_fam"/>
</dbReference>
<dbReference type="PANTHER" id="PTHR11061">
    <property type="entry name" value="RNA M5U METHYLTRANSFERASE"/>
    <property type="match status" value="1"/>
</dbReference>
<dbReference type="PANTHER" id="PTHR11061:SF30">
    <property type="entry name" value="TRNA (URACIL(54)-C(5))-METHYLTRANSFERASE"/>
    <property type="match status" value="1"/>
</dbReference>
<dbReference type="Pfam" id="PF01938">
    <property type="entry name" value="TRAM"/>
    <property type="match status" value="1"/>
</dbReference>
<dbReference type="Pfam" id="PF05958">
    <property type="entry name" value="tRNA_U5-meth_tr"/>
    <property type="match status" value="1"/>
</dbReference>
<dbReference type="SUPFAM" id="SSF50249">
    <property type="entry name" value="Nucleic acid-binding proteins"/>
    <property type="match status" value="1"/>
</dbReference>
<dbReference type="SUPFAM" id="SSF53335">
    <property type="entry name" value="S-adenosyl-L-methionine-dependent methyltransferases"/>
    <property type="match status" value="1"/>
</dbReference>
<dbReference type="PROSITE" id="PS51687">
    <property type="entry name" value="SAM_MT_RNA_M5U"/>
    <property type="match status" value="1"/>
</dbReference>
<dbReference type="PROSITE" id="PS50926">
    <property type="entry name" value="TRAM"/>
    <property type="match status" value="1"/>
</dbReference>
<dbReference type="PROSITE" id="PS01230">
    <property type="entry name" value="TRMA_1"/>
    <property type="match status" value="1"/>
</dbReference>
<accession>Q6NGV2</accession>
<evidence type="ECO:0000255" key="1">
    <source>
        <dbReference type="PROSITE-ProRule" id="PRU00208"/>
    </source>
</evidence>
<evidence type="ECO:0000255" key="2">
    <source>
        <dbReference type="PROSITE-ProRule" id="PRU01024"/>
    </source>
</evidence>
<protein>
    <recommendedName>
        <fullName>Uncharacterized RNA methyltransferase DIP1398</fullName>
        <ecNumber>2.1.1.-</ecNumber>
    </recommendedName>
</protein>
<feature type="chain" id="PRO_0000161974" description="Uncharacterized RNA methyltransferase DIP1398">
    <location>
        <begin position="1"/>
        <end position="420"/>
    </location>
</feature>
<feature type="domain" description="TRAM" evidence="1">
    <location>
        <begin position="7"/>
        <end position="65"/>
    </location>
</feature>
<feature type="active site" description="Nucleophile" evidence="2">
    <location>
        <position position="376"/>
    </location>
</feature>
<feature type="binding site" evidence="2">
    <location>
        <position position="245"/>
    </location>
    <ligand>
        <name>S-adenosyl-L-methionine</name>
        <dbReference type="ChEBI" id="CHEBI:59789"/>
    </ligand>
</feature>
<feature type="binding site" evidence="2">
    <location>
        <position position="280"/>
    </location>
    <ligand>
        <name>S-adenosyl-L-methionine</name>
        <dbReference type="ChEBI" id="CHEBI:59789"/>
    </ligand>
</feature>
<feature type="binding site" evidence="2">
    <location>
        <position position="304"/>
    </location>
    <ligand>
        <name>S-adenosyl-L-methionine</name>
        <dbReference type="ChEBI" id="CHEBI:59789"/>
    </ligand>
</feature>
<feature type="binding site" evidence="2">
    <location>
        <position position="349"/>
    </location>
    <ligand>
        <name>S-adenosyl-L-methionine</name>
        <dbReference type="ChEBI" id="CHEBI:59789"/>
    </ligand>
</feature>
<sequence length="420" mass="44995">MTKDQQNIERGSVINVEILNAAHGGQGIAKYDGRVIFVKGAFPGDRLSANITHVKKKFARATIASIEMPSPLRMQQRCLAAANGAGCCDFGEFDPEIEGRYKADLVLEQLERLGKVSQPPTCEVVSFGSPTQWRTRMRLGVDAQGRAGGFASQSREVVSGVPCSQGVMGLLDGIVGAEQNVLRFTPGSQVVVVCDDLGQRTVVETQPAPRGKRTESMVKVVEGTGKVSQVVDGVTFELPATGFWQSHKDAAQAYADTIREWFGSLIIRNTDSSLVAWDLYGGCGSFASAILSAVDNHGVVHCVESAPAAVSAGKRALSQLVEDQKIVFHTETVERAMNQLPAPTLVVLDPPRVGAGAETVRAIAQSGPQAAIHIGCDPATFARDIAEWSRNGFILEKLRVFDAFPGTHHCETIGLLTKKN</sequence>
<organism>
    <name type="scientific">Corynebacterium diphtheriae (strain ATCC 700971 / NCTC 13129 / Biotype gravis)</name>
    <dbReference type="NCBI Taxonomy" id="257309"/>
    <lineage>
        <taxon>Bacteria</taxon>
        <taxon>Bacillati</taxon>
        <taxon>Actinomycetota</taxon>
        <taxon>Actinomycetes</taxon>
        <taxon>Mycobacteriales</taxon>
        <taxon>Corynebacteriaceae</taxon>
        <taxon>Corynebacterium</taxon>
    </lineage>
</organism>
<reference key="1">
    <citation type="journal article" date="2003" name="Nucleic Acids Res.">
        <title>The complete genome sequence and analysis of Corynebacterium diphtheriae NCTC13129.</title>
        <authorList>
            <person name="Cerdeno-Tarraga A.-M."/>
            <person name="Efstratiou A."/>
            <person name="Dover L.G."/>
            <person name="Holden M.T.G."/>
            <person name="Pallen M.J."/>
            <person name="Bentley S.D."/>
            <person name="Besra G.S."/>
            <person name="Churcher C.M."/>
            <person name="James K.D."/>
            <person name="De Zoysa A."/>
            <person name="Chillingworth T."/>
            <person name="Cronin A."/>
            <person name="Dowd L."/>
            <person name="Feltwell T."/>
            <person name="Hamlin N."/>
            <person name="Holroyd S."/>
            <person name="Jagels K."/>
            <person name="Moule S."/>
            <person name="Quail M.A."/>
            <person name="Rabbinowitsch E."/>
            <person name="Rutherford K.M."/>
            <person name="Thomson N.R."/>
            <person name="Unwin L."/>
            <person name="Whitehead S."/>
            <person name="Barrell B.G."/>
            <person name="Parkhill J."/>
        </authorList>
    </citation>
    <scope>NUCLEOTIDE SEQUENCE [LARGE SCALE GENOMIC DNA]</scope>
    <source>
        <strain>ATCC 700971 / NCTC 13129 / Biotype gravis</strain>
    </source>
</reference>
<gene>
    <name type="ordered locus">DIP1398</name>
</gene>
<name>Y1398_CORDI</name>
<keyword id="KW-0489">Methyltransferase</keyword>
<keyword id="KW-1185">Reference proteome</keyword>
<keyword id="KW-0949">S-adenosyl-L-methionine</keyword>
<keyword id="KW-0808">Transferase</keyword>
<proteinExistence type="inferred from homology"/>
<comment type="similarity">
    <text evidence="2">Belongs to the class I-like SAM-binding methyltransferase superfamily. RNA M5U methyltransferase family.</text>
</comment>